<gene>
    <name type="primary">EFR3</name>
    <name type="ordered locus">CAALFM_C109360CA</name>
    <name type="ORF">CaO19.12261</name>
    <name type="ORF">CaO19.4798</name>
</gene>
<evidence type="ECO:0000256" key="1">
    <source>
        <dbReference type="SAM" id="MobiDB-lite"/>
    </source>
</evidence>
<evidence type="ECO:0000305" key="2"/>
<dbReference type="EMBL" id="CP017623">
    <property type="protein sequence ID" value="AOW26570.1"/>
    <property type="molecule type" value="Genomic_DNA"/>
</dbReference>
<dbReference type="RefSeq" id="XP_723484.2">
    <property type="nucleotide sequence ID" value="XM_718391.2"/>
</dbReference>
<dbReference type="SMR" id="Q5APG7"/>
<dbReference type="STRING" id="237561.Q5APG7"/>
<dbReference type="EnsemblFungi" id="C1_09360C_A-T">
    <property type="protein sequence ID" value="C1_09360C_A-T-p1"/>
    <property type="gene ID" value="C1_09360C_A"/>
</dbReference>
<dbReference type="GeneID" id="3634807"/>
<dbReference type="KEGG" id="cal:CAALFM_C109360CA"/>
<dbReference type="CGD" id="CAL0000200870">
    <property type="gene designation" value="EFR3"/>
</dbReference>
<dbReference type="VEuPathDB" id="FungiDB:C1_09360C_A"/>
<dbReference type="eggNOG" id="KOG1877">
    <property type="taxonomic scope" value="Eukaryota"/>
</dbReference>
<dbReference type="HOGENOM" id="CLU_333688_0_0_1"/>
<dbReference type="InParanoid" id="Q5APG7"/>
<dbReference type="OrthoDB" id="19232at2759"/>
<dbReference type="PRO" id="PR:Q5APG7"/>
<dbReference type="Proteomes" id="UP000000559">
    <property type="component" value="Chromosome 1"/>
</dbReference>
<dbReference type="GO" id="GO:0005886">
    <property type="term" value="C:plasma membrane"/>
    <property type="evidence" value="ECO:0000318"/>
    <property type="project" value="GO_Central"/>
</dbReference>
<dbReference type="GO" id="GO:0072659">
    <property type="term" value="P:protein localization to plasma membrane"/>
    <property type="evidence" value="ECO:0000318"/>
    <property type="project" value="GO_Central"/>
</dbReference>
<dbReference type="InterPro" id="IPR016024">
    <property type="entry name" value="ARM-type_fold"/>
</dbReference>
<dbReference type="InterPro" id="IPR039786">
    <property type="entry name" value="EFR3"/>
</dbReference>
<dbReference type="InterPro" id="IPR049150">
    <property type="entry name" value="EFR3_HEAT-like_rpt"/>
</dbReference>
<dbReference type="PANTHER" id="PTHR47766">
    <property type="entry name" value="PROTEIN EFR3"/>
    <property type="match status" value="1"/>
</dbReference>
<dbReference type="PANTHER" id="PTHR47766:SF1">
    <property type="entry name" value="PROTEIN EFR3"/>
    <property type="match status" value="1"/>
</dbReference>
<dbReference type="Pfam" id="PF21072">
    <property type="entry name" value="EFR3"/>
    <property type="match status" value="1"/>
</dbReference>
<dbReference type="SUPFAM" id="SSF48371">
    <property type="entry name" value="ARM repeat"/>
    <property type="match status" value="1"/>
</dbReference>
<proteinExistence type="inferred from homology"/>
<feature type="chain" id="PRO_0000270772" description="Protein EFR3">
    <location>
        <begin position="1"/>
        <end position="958"/>
    </location>
</feature>
<feature type="region of interest" description="Disordered" evidence="1">
    <location>
        <begin position="540"/>
        <end position="564"/>
    </location>
</feature>
<feature type="compositionally biased region" description="Basic and acidic residues" evidence="1">
    <location>
        <begin position="550"/>
        <end position="564"/>
    </location>
</feature>
<sequence length="958" mass="107765">MNLFQHKHQKLILQCYPAGKAVDKKPNSSELSYLLYYASTRRVKLEKVINFLKDKTHHDVGRNRTGNLQVTLAIIQELIKKCSENLNVFAFQVCYILQSIANTKDLALCKNVVKTFGVLCENLDGGLFTGDKEFIKIFTEVFQTLVSFGKDRSGVTQYDWQMISLMAINDISSCLSYNAAVGKKFIALSIPVLLQFIIANNPQSSILQRLKSNLHVEDDGKRLSRAHSQKSHSKIAQQIDDDFTNDSLTLTDITEKAFSSMKSFFNTNAASQISEVTRAVVQHNILNGTDLEWGVSFLELCITWIPVQLRFVSLSTLLATLGRINIEGNTKSNYNMQFQYARYLLGLLSSRVNMIGLSVSDIIQQLLSLQADLILKASDLDKSEISILTDIYSDCICSLTTHIYYFDQVPDSIQEILIKIDYILESSFVEDNNITSTGEQIQDLIIQLLDNISKIFLILKNKSSSINRNHVNLEHWDISLGLLAPQGDHDDNRKMIISTPQLINIQAKYLKVFDEFLNNELAVGNSKKSYDLLSKQSRLDPGSTAVEGVNKSDDSDNGKDFKKPDANQYITNQQNFISHFLMYIDKFFENYDSPNTQSVLLLVTVLKDMMNILGLNFLSNFIPFFHHWVMKVNRASNFTQRQKFKDTFAHIILYYMLKDLDEQYSHDLQNYCKSSKLFKQILDAVEYRKMQKFWVYGIDPSPSDLENIKGDRTIPTDANGNYIAIRIKPENIEEFACGNNFLIVWLHPQKQLLTEIEKSQVSTHMSTFNNDSRNTNMTVIMDQGSSALSGGADHGGHFVPPPEFVNHTGLSSESASSNSEKGLYTGLGLGTAGDITMIHSEILQYSQHFQERGLPHGNGFATILRTVDSVNSTNDGLIYTYDSKYLQSPRVSDLKDAMSTHRGIRLSKPNFGGANGTANMTDSASTSNGSVLNKNMQTTDVDSILSGLESEDEAAFVV</sequence>
<organism>
    <name type="scientific">Candida albicans (strain SC5314 / ATCC MYA-2876)</name>
    <name type="common">Yeast</name>
    <dbReference type="NCBI Taxonomy" id="237561"/>
    <lineage>
        <taxon>Eukaryota</taxon>
        <taxon>Fungi</taxon>
        <taxon>Dikarya</taxon>
        <taxon>Ascomycota</taxon>
        <taxon>Saccharomycotina</taxon>
        <taxon>Pichiomycetes</taxon>
        <taxon>Debaryomycetaceae</taxon>
        <taxon>Candida/Lodderomyces clade</taxon>
        <taxon>Candida</taxon>
    </lineage>
</organism>
<protein>
    <recommendedName>
        <fullName>Protein EFR3</fullName>
    </recommendedName>
</protein>
<reference key="1">
    <citation type="journal article" date="2004" name="Proc. Natl. Acad. Sci. U.S.A.">
        <title>The diploid genome sequence of Candida albicans.</title>
        <authorList>
            <person name="Jones T."/>
            <person name="Federspiel N.A."/>
            <person name="Chibana H."/>
            <person name="Dungan J."/>
            <person name="Kalman S."/>
            <person name="Magee B.B."/>
            <person name="Newport G."/>
            <person name="Thorstenson Y.R."/>
            <person name="Agabian N."/>
            <person name="Magee P.T."/>
            <person name="Davis R.W."/>
            <person name="Scherer S."/>
        </authorList>
    </citation>
    <scope>NUCLEOTIDE SEQUENCE [LARGE SCALE GENOMIC DNA]</scope>
    <source>
        <strain>SC5314 / ATCC MYA-2876</strain>
    </source>
</reference>
<reference key="2">
    <citation type="journal article" date="2007" name="Genome Biol.">
        <title>Assembly of the Candida albicans genome into sixteen supercontigs aligned on the eight chromosomes.</title>
        <authorList>
            <person name="van het Hoog M."/>
            <person name="Rast T.J."/>
            <person name="Martchenko M."/>
            <person name="Grindle S."/>
            <person name="Dignard D."/>
            <person name="Hogues H."/>
            <person name="Cuomo C."/>
            <person name="Berriman M."/>
            <person name="Scherer S."/>
            <person name="Magee B.B."/>
            <person name="Whiteway M."/>
            <person name="Chibana H."/>
            <person name="Nantel A."/>
            <person name="Magee P.T."/>
        </authorList>
    </citation>
    <scope>GENOME REANNOTATION</scope>
    <source>
        <strain>SC5314 / ATCC MYA-2876</strain>
    </source>
</reference>
<reference key="3">
    <citation type="journal article" date="2013" name="Genome Biol.">
        <title>Assembly of a phased diploid Candida albicans genome facilitates allele-specific measurements and provides a simple model for repeat and indel structure.</title>
        <authorList>
            <person name="Muzzey D."/>
            <person name="Schwartz K."/>
            <person name="Weissman J.S."/>
            <person name="Sherlock G."/>
        </authorList>
    </citation>
    <scope>NUCLEOTIDE SEQUENCE [LARGE SCALE GENOMIC DNA]</scope>
    <scope>GENOME REANNOTATION</scope>
    <source>
        <strain>SC5314 / ATCC MYA-2876</strain>
    </source>
</reference>
<comment type="similarity">
    <text evidence="2">Belongs to the EFR3 family.</text>
</comment>
<keyword id="KW-1185">Reference proteome</keyword>
<name>EFR3_CANAL</name>
<accession>Q5APG7</accession>
<accession>A0A1D8PEP7</accession>